<dbReference type="EMBL" id="X63503">
    <property type="protein sequence ID" value="CAA45074.1"/>
    <property type="molecule type" value="Genomic_DNA"/>
</dbReference>
<dbReference type="EMBL" id="AE014297">
    <property type="protein sequence ID" value="AAF56858.2"/>
    <property type="molecule type" value="Genomic_DNA"/>
</dbReference>
<dbReference type="EMBL" id="BT015223">
    <property type="protein sequence ID" value="AAT94452.1"/>
    <property type="status" value="ALT_FRAME"/>
    <property type="molecule type" value="mRNA"/>
</dbReference>
<dbReference type="PIR" id="A56678">
    <property type="entry name" value="A56678"/>
</dbReference>
<dbReference type="RefSeq" id="NP_476893.1">
    <property type="nucleotide sequence ID" value="NM_057545.4"/>
</dbReference>
<dbReference type="BioGRID" id="68310">
    <property type="interactions" value="11"/>
</dbReference>
<dbReference type="DIP" id="DIP-21793N"/>
<dbReference type="FunCoup" id="P25992">
    <property type="interactions" value="1331"/>
</dbReference>
<dbReference type="IntAct" id="P25992">
    <property type="interactions" value="10"/>
</dbReference>
<dbReference type="STRING" id="7227.FBpp0303324"/>
<dbReference type="iPTMnet" id="P25992"/>
<dbReference type="PaxDb" id="7227-FBpp0084784"/>
<dbReference type="EnsemblMetazoa" id="FBtr0085415">
    <property type="protein sequence ID" value="FBpp0084784"/>
    <property type="gene ID" value="FBgn0005596"/>
</dbReference>
<dbReference type="GeneID" id="43439"/>
<dbReference type="KEGG" id="dme:Dmel_CG14513"/>
<dbReference type="AGR" id="FB:FBgn0005596"/>
<dbReference type="CTD" id="43439"/>
<dbReference type="FlyBase" id="FBgn0005596">
    <property type="gene designation" value="yem"/>
</dbReference>
<dbReference type="VEuPathDB" id="VectorBase:FBgn0005596"/>
<dbReference type="eggNOG" id="KOG4786">
    <property type="taxonomic scope" value="Eukaryota"/>
</dbReference>
<dbReference type="HOGENOM" id="CLU_282458_0_0_1"/>
<dbReference type="InParanoid" id="P25992"/>
<dbReference type="OMA" id="DSNRYPE"/>
<dbReference type="OrthoDB" id="68076at2759"/>
<dbReference type="PhylomeDB" id="P25992"/>
<dbReference type="BioGRID-ORCS" id="43439">
    <property type="hits" value="0 hits in 3 CRISPR screens"/>
</dbReference>
<dbReference type="GenomeRNAi" id="43439"/>
<dbReference type="PRO" id="PR:P25992"/>
<dbReference type="Proteomes" id="UP000000803">
    <property type="component" value="Chromosome 3R"/>
</dbReference>
<dbReference type="Bgee" id="FBgn0005596">
    <property type="expression patterns" value="Expressed in secondary oocyte and 87 other cell types or tissues"/>
</dbReference>
<dbReference type="ExpressionAtlas" id="P25992">
    <property type="expression patterns" value="baseline and differential"/>
</dbReference>
<dbReference type="GO" id="GO:0042585">
    <property type="term" value="C:germinal vesicle"/>
    <property type="evidence" value="ECO:0000314"/>
    <property type="project" value="FlyBase"/>
</dbReference>
<dbReference type="GO" id="GO:0000776">
    <property type="term" value="C:kinetochore"/>
    <property type="evidence" value="ECO:0000314"/>
    <property type="project" value="FlyBase"/>
</dbReference>
<dbReference type="GO" id="GO:0001940">
    <property type="term" value="C:male pronucleus"/>
    <property type="evidence" value="ECO:0000314"/>
    <property type="project" value="FlyBase"/>
</dbReference>
<dbReference type="GO" id="GO:0005654">
    <property type="term" value="C:nucleoplasm"/>
    <property type="evidence" value="ECO:0007669"/>
    <property type="project" value="UniProtKB-SubCell"/>
</dbReference>
<dbReference type="GO" id="GO:0005634">
    <property type="term" value="C:nucleus"/>
    <property type="evidence" value="ECO:0000314"/>
    <property type="project" value="FlyBase"/>
</dbReference>
<dbReference type="GO" id="GO:0003677">
    <property type="term" value="F:DNA binding"/>
    <property type="evidence" value="ECO:0000314"/>
    <property type="project" value="FlyBase"/>
</dbReference>
<dbReference type="GO" id="GO:0006325">
    <property type="term" value="P:chromatin organization"/>
    <property type="evidence" value="ECO:0000315"/>
    <property type="project" value="FlyBase"/>
</dbReference>
<dbReference type="GO" id="GO:0007143">
    <property type="term" value="P:female meiotic nuclear division"/>
    <property type="evidence" value="ECO:0000315"/>
    <property type="project" value="FlyBase"/>
</dbReference>
<dbReference type="InterPro" id="IPR014840">
    <property type="entry name" value="HRD"/>
</dbReference>
<dbReference type="InterPro" id="IPR026947">
    <property type="entry name" value="UBN_middle_dom"/>
</dbReference>
<dbReference type="PANTHER" id="PTHR21669">
    <property type="entry name" value="CAPZ-INTERACTING PROTEIN AND RELATED PROTEINS"/>
    <property type="match status" value="1"/>
</dbReference>
<dbReference type="PANTHER" id="PTHR21669:SF28">
    <property type="entry name" value="YEMANUCLEIN"/>
    <property type="match status" value="1"/>
</dbReference>
<dbReference type="Pfam" id="PF08729">
    <property type="entry name" value="HUN"/>
    <property type="match status" value="1"/>
</dbReference>
<dbReference type="Pfam" id="PF14075">
    <property type="entry name" value="UBN_AB"/>
    <property type="match status" value="1"/>
</dbReference>
<name>YEMA_DROME</name>
<organism>
    <name type="scientific">Drosophila melanogaster</name>
    <name type="common">Fruit fly</name>
    <dbReference type="NCBI Taxonomy" id="7227"/>
    <lineage>
        <taxon>Eukaryota</taxon>
        <taxon>Metazoa</taxon>
        <taxon>Ecdysozoa</taxon>
        <taxon>Arthropoda</taxon>
        <taxon>Hexapoda</taxon>
        <taxon>Insecta</taxon>
        <taxon>Pterygota</taxon>
        <taxon>Neoptera</taxon>
        <taxon>Endopterygota</taxon>
        <taxon>Diptera</taxon>
        <taxon>Brachycera</taxon>
        <taxon>Muscomorpha</taxon>
        <taxon>Ephydroidea</taxon>
        <taxon>Drosophilidae</taxon>
        <taxon>Drosophila</taxon>
        <taxon>Sophophora</taxon>
    </lineage>
</organism>
<comment type="function">
    <text evidence="3 5">May play a key role in egg organization. May be a transcriptional regulator having a role in chromatin remodeling in concert with Hira, a histone chaperone. Involved in chromosome segregation by affecting kinetochores function in the first meiotic division.</text>
</comment>
<comment type="subcellular location">
    <subcellularLocation>
        <location>Nucleus</location>
        <location>Nucleoplasm</location>
    </subcellularLocation>
    <subcellularLocation>
        <location>Chromosome</location>
    </subcellularLocation>
    <subcellularLocation>
        <location>Chromosome</location>
        <location>Centromere</location>
        <location>Kinetochore</location>
    </subcellularLocation>
    <text>Abundant in the nucleoplasm. Only a fraction of the protein is associated with the chromosomes. Localizes to the chromosome arms and coexpresses with cid at the centromere.</text>
</comment>
<comment type="tissue specificity">
    <text evidence="3 5">Oocyte specific.</text>
</comment>
<comment type="developmental stage">
    <text evidence="3">Expressed both maternally and zygotically. Expressed at all oogenic stages.</text>
</comment>
<comment type="PTM">
    <text>The N-terminus is blocked.</text>
</comment>
<comment type="disruption phenotype">
    <text evidence="5">Females exhibit disrupted chromosome segregation in the first meiotic division and produce very low numbers of viable progeny. This female sterility is partially suppressed when some oocytes undergo precocious anaphase. Analysis of the X chromosome of these progeny demonstrates they have inherited the two maternal X-chromosome homologs and have no paternal chromosome markers. This suggests that they developed from diploid gametes that underwent gynogenesis, a form of parthenogenesis that requires fertilization.</text>
</comment>
<comment type="sequence caution" evidence="7">
    <conflict type="frameshift">
        <sequence resource="EMBL-CDS" id="AAT94452"/>
    </conflict>
</comment>
<keyword id="KW-0137">Centromere</keyword>
<keyword id="KW-0158">Chromosome</keyword>
<keyword id="KW-0238">DNA-binding</keyword>
<keyword id="KW-0995">Kinetochore</keyword>
<keyword id="KW-0539">Nucleus</keyword>
<keyword id="KW-0597">Phosphoprotein</keyword>
<keyword id="KW-1185">Reference proteome</keyword>
<keyword id="KW-0677">Repeat</keyword>
<protein>
    <recommendedName>
        <fullName evidence="8">yemanuclein</fullName>
    </recommendedName>
    <alternativeName>
        <fullName evidence="6">Yemanuclein-alpha</fullName>
    </alternativeName>
</protein>
<reference key="1">
    <citation type="journal article" date="1992" name="Mech. Dev.">
        <title>The yemanuclein-alpha: a new Drosophila DNA binding protein specific for the oocyte nucleus.</title>
        <authorList>
            <person name="Ait-Ahmed O."/>
            <person name="Bellon B."/>
            <person name="Capri M."/>
            <person name="Joblet C."/>
            <person name="Thomas-Delaage M."/>
        </authorList>
    </citation>
    <scope>NUCLEOTIDE SEQUENCE [GENOMIC DNA / MRNA]</scope>
    <scope>FUNCTION</scope>
    <scope>SUBCELLULAR LOCATION</scope>
    <scope>TISSUE SPECIFICITY</scope>
    <scope>DEVELOPMENTAL STAGE</scope>
    <source>
        <strain>Canton-S</strain>
    </source>
</reference>
<reference key="2">
    <citation type="journal article" date="2000" name="Science">
        <title>The genome sequence of Drosophila melanogaster.</title>
        <authorList>
            <person name="Adams M.D."/>
            <person name="Celniker S.E."/>
            <person name="Holt R.A."/>
            <person name="Evans C.A."/>
            <person name="Gocayne J.D."/>
            <person name="Amanatides P.G."/>
            <person name="Scherer S.E."/>
            <person name="Li P.W."/>
            <person name="Hoskins R.A."/>
            <person name="Galle R.F."/>
            <person name="George R.A."/>
            <person name="Lewis S.E."/>
            <person name="Richards S."/>
            <person name="Ashburner M."/>
            <person name="Henderson S.N."/>
            <person name="Sutton G.G."/>
            <person name="Wortman J.R."/>
            <person name="Yandell M.D."/>
            <person name="Zhang Q."/>
            <person name="Chen L.X."/>
            <person name="Brandon R.C."/>
            <person name="Rogers Y.-H.C."/>
            <person name="Blazej R.G."/>
            <person name="Champe M."/>
            <person name="Pfeiffer B.D."/>
            <person name="Wan K.H."/>
            <person name="Doyle C."/>
            <person name="Baxter E.G."/>
            <person name="Helt G."/>
            <person name="Nelson C.R."/>
            <person name="Miklos G.L.G."/>
            <person name="Abril J.F."/>
            <person name="Agbayani A."/>
            <person name="An H.-J."/>
            <person name="Andrews-Pfannkoch C."/>
            <person name="Baldwin D."/>
            <person name="Ballew R.M."/>
            <person name="Basu A."/>
            <person name="Baxendale J."/>
            <person name="Bayraktaroglu L."/>
            <person name="Beasley E.M."/>
            <person name="Beeson K.Y."/>
            <person name="Benos P.V."/>
            <person name="Berman B.P."/>
            <person name="Bhandari D."/>
            <person name="Bolshakov S."/>
            <person name="Borkova D."/>
            <person name="Botchan M.R."/>
            <person name="Bouck J."/>
            <person name="Brokstein P."/>
            <person name="Brottier P."/>
            <person name="Burtis K.C."/>
            <person name="Busam D.A."/>
            <person name="Butler H."/>
            <person name="Cadieu E."/>
            <person name="Center A."/>
            <person name="Chandra I."/>
            <person name="Cherry J.M."/>
            <person name="Cawley S."/>
            <person name="Dahlke C."/>
            <person name="Davenport L.B."/>
            <person name="Davies P."/>
            <person name="de Pablos B."/>
            <person name="Delcher A."/>
            <person name="Deng Z."/>
            <person name="Mays A.D."/>
            <person name="Dew I."/>
            <person name="Dietz S.M."/>
            <person name="Dodson K."/>
            <person name="Doup L.E."/>
            <person name="Downes M."/>
            <person name="Dugan-Rocha S."/>
            <person name="Dunkov B.C."/>
            <person name="Dunn P."/>
            <person name="Durbin K.J."/>
            <person name="Evangelista C.C."/>
            <person name="Ferraz C."/>
            <person name="Ferriera S."/>
            <person name="Fleischmann W."/>
            <person name="Fosler C."/>
            <person name="Gabrielian A.E."/>
            <person name="Garg N.S."/>
            <person name="Gelbart W.M."/>
            <person name="Glasser K."/>
            <person name="Glodek A."/>
            <person name="Gong F."/>
            <person name="Gorrell J.H."/>
            <person name="Gu Z."/>
            <person name="Guan P."/>
            <person name="Harris M."/>
            <person name="Harris N.L."/>
            <person name="Harvey D.A."/>
            <person name="Heiman T.J."/>
            <person name="Hernandez J.R."/>
            <person name="Houck J."/>
            <person name="Hostin D."/>
            <person name="Houston K.A."/>
            <person name="Howland T.J."/>
            <person name="Wei M.-H."/>
            <person name="Ibegwam C."/>
            <person name="Jalali M."/>
            <person name="Kalush F."/>
            <person name="Karpen G.H."/>
            <person name="Ke Z."/>
            <person name="Kennison J.A."/>
            <person name="Ketchum K.A."/>
            <person name="Kimmel B.E."/>
            <person name="Kodira C.D."/>
            <person name="Kraft C.L."/>
            <person name="Kravitz S."/>
            <person name="Kulp D."/>
            <person name="Lai Z."/>
            <person name="Lasko P."/>
            <person name="Lei Y."/>
            <person name="Levitsky A.A."/>
            <person name="Li J.H."/>
            <person name="Li Z."/>
            <person name="Liang Y."/>
            <person name="Lin X."/>
            <person name="Liu X."/>
            <person name="Mattei B."/>
            <person name="McIntosh T.C."/>
            <person name="McLeod M.P."/>
            <person name="McPherson D."/>
            <person name="Merkulov G."/>
            <person name="Milshina N.V."/>
            <person name="Mobarry C."/>
            <person name="Morris J."/>
            <person name="Moshrefi A."/>
            <person name="Mount S.M."/>
            <person name="Moy M."/>
            <person name="Murphy B."/>
            <person name="Murphy L."/>
            <person name="Muzny D.M."/>
            <person name="Nelson D.L."/>
            <person name="Nelson D.R."/>
            <person name="Nelson K.A."/>
            <person name="Nixon K."/>
            <person name="Nusskern D.R."/>
            <person name="Pacleb J.M."/>
            <person name="Palazzolo M."/>
            <person name="Pittman G.S."/>
            <person name="Pan S."/>
            <person name="Pollard J."/>
            <person name="Puri V."/>
            <person name="Reese M.G."/>
            <person name="Reinert K."/>
            <person name="Remington K."/>
            <person name="Saunders R.D.C."/>
            <person name="Scheeler F."/>
            <person name="Shen H."/>
            <person name="Shue B.C."/>
            <person name="Siden-Kiamos I."/>
            <person name="Simpson M."/>
            <person name="Skupski M.P."/>
            <person name="Smith T.J."/>
            <person name="Spier E."/>
            <person name="Spradling A.C."/>
            <person name="Stapleton M."/>
            <person name="Strong R."/>
            <person name="Sun E."/>
            <person name="Svirskas R."/>
            <person name="Tector C."/>
            <person name="Turner R."/>
            <person name="Venter E."/>
            <person name="Wang A.H."/>
            <person name="Wang X."/>
            <person name="Wang Z.-Y."/>
            <person name="Wassarman D.A."/>
            <person name="Weinstock G.M."/>
            <person name="Weissenbach J."/>
            <person name="Williams S.M."/>
            <person name="Woodage T."/>
            <person name="Worley K.C."/>
            <person name="Wu D."/>
            <person name="Yang S."/>
            <person name="Yao Q.A."/>
            <person name="Ye J."/>
            <person name="Yeh R.-F."/>
            <person name="Zaveri J.S."/>
            <person name="Zhan M."/>
            <person name="Zhang G."/>
            <person name="Zhao Q."/>
            <person name="Zheng L."/>
            <person name="Zheng X.H."/>
            <person name="Zhong F.N."/>
            <person name="Zhong W."/>
            <person name="Zhou X."/>
            <person name="Zhu S.C."/>
            <person name="Zhu X."/>
            <person name="Smith H.O."/>
            <person name="Gibbs R.A."/>
            <person name="Myers E.W."/>
            <person name="Rubin G.M."/>
            <person name="Venter J.C."/>
        </authorList>
    </citation>
    <scope>NUCLEOTIDE SEQUENCE [LARGE SCALE GENOMIC DNA]</scope>
    <source>
        <strain>Berkeley</strain>
    </source>
</reference>
<reference key="3">
    <citation type="journal article" date="2002" name="Genome Biol.">
        <title>Annotation of the Drosophila melanogaster euchromatic genome: a systematic review.</title>
        <authorList>
            <person name="Misra S."/>
            <person name="Crosby M.A."/>
            <person name="Mungall C.J."/>
            <person name="Matthews B.B."/>
            <person name="Campbell K.S."/>
            <person name="Hradecky P."/>
            <person name="Huang Y."/>
            <person name="Kaminker J.S."/>
            <person name="Millburn G.H."/>
            <person name="Prochnik S.E."/>
            <person name="Smith C.D."/>
            <person name="Tupy J.L."/>
            <person name="Whitfield E.J."/>
            <person name="Bayraktaroglu L."/>
            <person name="Berman B.P."/>
            <person name="Bettencourt B.R."/>
            <person name="Celniker S.E."/>
            <person name="de Grey A.D.N.J."/>
            <person name="Drysdale R.A."/>
            <person name="Harris N.L."/>
            <person name="Richter J."/>
            <person name="Russo S."/>
            <person name="Schroeder A.J."/>
            <person name="Shu S.Q."/>
            <person name="Stapleton M."/>
            <person name="Yamada C."/>
            <person name="Ashburner M."/>
            <person name="Gelbart W.M."/>
            <person name="Rubin G.M."/>
            <person name="Lewis S.E."/>
        </authorList>
    </citation>
    <scope>GENOME REANNOTATION</scope>
    <source>
        <strain>Berkeley</strain>
    </source>
</reference>
<reference key="4">
    <citation type="submission" date="2004-08" db="EMBL/GenBank/DDBJ databases">
        <authorList>
            <person name="Stapleton M."/>
            <person name="Carlson J.W."/>
            <person name="Chavez C."/>
            <person name="Frise E."/>
            <person name="George R.A."/>
            <person name="Pacleb J.M."/>
            <person name="Park S."/>
            <person name="Wan K.H."/>
            <person name="Yu C."/>
            <person name="Rubin G.M."/>
            <person name="Celniker S.E."/>
        </authorList>
    </citation>
    <scope>NUCLEOTIDE SEQUENCE [LARGE SCALE MRNA]</scope>
    <source>
        <strain>Berkeley</strain>
        <tissue>Embryo</tissue>
    </source>
</reference>
<reference key="5">
    <citation type="journal article" date="2008" name="J. Proteome Res.">
        <title>Phosphoproteome analysis of Drosophila melanogaster embryos.</title>
        <authorList>
            <person name="Zhai B."/>
            <person name="Villen J."/>
            <person name="Beausoleil S.A."/>
            <person name="Mintseris J."/>
            <person name="Gygi S.P."/>
        </authorList>
    </citation>
    <scope>PHOSPHORYLATION [LARGE SCALE ANALYSIS] AT SER-685; SER-689; SER-885; SER-886 AND SER-887</scope>
    <scope>IDENTIFICATION BY MASS SPECTROMETRY</scope>
    <source>
        <tissue>Embryo</tissue>
    </source>
</reference>
<reference key="6">
    <citation type="journal article" date="2010" name="BMC Genet.">
        <title>A single mutation results in diploid gamete formation and parthenogenesis in a Drosophila yemanuclein-alpha meiosis I defective mutant.</title>
        <authorList>
            <person name="Meyer R.E."/>
            <person name="Delaage M."/>
            <person name="Rosset R."/>
            <person name="Capri M."/>
            <person name="Ait-Ahmed O."/>
        </authorList>
    </citation>
    <scope>FUNCTION</scope>
    <scope>SUBCELLULAR LOCATION</scope>
    <scope>TISSUE SPECIFICITY</scope>
    <scope>DISRUPTION PHENOTYPE</scope>
    <scope>MUTAGENESIS OF VAL-478</scope>
</reference>
<gene>
    <name evidence="8" type="primary">yem</name>
    <name evidence="8" type="synonym">yema</name>
    <name evidence="6" type="synonym">yemalpha</name>
    <name type="synonym">yG4.5</name>
    <name evidence="8" type="ORF">CG14513</name>
</gene>
<feature type="chain" id="PRO_0000066201" description="yemanuclein">
    <location>
        <begin position="1"/>
        <end position="1002"/>
    </location>
</feature>
<feature type="repeat" description="1">
    <location>
        <begin position="230"/>
        <end position="241"/>
    </location>
</feature>
<feature type="repeat" description="2">
    <location>
        <begin position="242"/>
        <end position="253"/>
    </location>
</feature>
<feature type="region of interest" description="Disordered" evidence="2">
    <location>
        <begin position="193"/>
        <end position="358"/>
    </location>
</feature>
<feature type="region of interest" description="2 X 12 AA tandem repeats">
    <location>
        <begin position="230"/>
        <end position="253"/>
    </location>
</feature>
<feature type="region of interest" description="Disordered" evidence="2">
    <location>
        <begin position="395"/>
        <end position="428"/>
    </location>
</feature>
<feature type="region of interest" description="Disordered" evidence="2">
    <location>
        <begin position="642"/>
        <end position="725"/>
    </location>
</feature>
<feature type="region of interest" description="Disordered" evidence="2">
    <location>
        <begin position="901"/>
        <end position="928"/>
    </location>
</feature>
<feature type="short sequence motif" description="Nuclear localization signal" evidence="1">
    <location>
        <begin position="80"/>
        <end position="85"/>
    </location>
</feature>
<feature type="compositionally biased region" description="Low complexity" evidence="2">
    <location>
        <begin position="207"/>
        <end position="217"/>
    </location>
</feature>
<feature type="compositionally biased region" description="Acidic residues" evidence="2">
    <location>
        <begin position="218"/>
        <end position="262"/>
    </location>
</feature>
<feature type="compositionally biased region" description="Low complexity" evidence="2">
    <location>
        <begin position="286"/>
        <end position="320"/>
    </location>
</feature>
<feature type="compositionally biased region" description="Low complexity" evidence="2">
    <location>
        <begin position="336"/>
        <end position="358"/>
    </location>
</feature>
<feature type="compositionally biased region" description="Low complexity" evidence="2">
    <location>
        <begin position="395"/>
        <end position="404"/>
    </location>
</feature>
<feature type="compositionally biased region" description="Basic and acidic residues" evidence="2">
    <location>
        <begin position="408"/>
        <end position="427"/>
    </location>
</feature>
<feature type="compositionally biased region" description="Low complexity" evidence="2">
    <location>
        <begin position="653"/>
        <end position="667"/>
    </location>
</feature>
<feature type="compositionally biased region" description="Basic and acidic residues" evidence="2">
    <location>
        <begin position="679"/>
        <end position="689"/>
    </location>
</feature>
<feature type="compositionally biased region" description="Low complexity" evidence="2">
    <location>
        <begin position="690"/>
        <end position="701"/>
    </location>
</feature>
<feature type="compositionally biased region" description="Basic residues" evidence="2">
    <location>
        <begin position="903"/>
        <end position="917"/>
    </location>
</feature>
<feature type="modified residue" description="Phosphoserine" evidence="4">
    <location>
        <position position="685"/>
    </location>
</feature>
<feature type="modified residue" description="Phosphoserine" evidence="4">
    <location>
        <position position="689"/>
    </location>
</feature>
<feature type="modified residue" description="Phosphoserine" evidence="4">
    <location>
        <position position="885"/>
    </location>
</feature>
<feature type="modified residue" description="Phosphoserine" evidence="4">
    <location>
        <position position="886"/>
    </location>
</feature>
<feature type="modified residue" description="Phosphoserine" evidence="4">
    <location>
        <position position="887"/>
    </location>
</feature>
<feature type="sequence variant">
    <original>S</original>
    <variation>L</variation>
    <location>
        <position position="698"/>
    </location>
</feature>
<feature type="mutagenesis site" description="Displays defects in aligning on the meiotic spindle." evidence="5">
    <original>V</original>
    <variation>E</variation>
    <location>
        <position position="478"/>
    </location>
</feature>
<proteinExistence type="evidence at protein level"/>
<accession>P25992</accession>
<accession>Q6AWM5</accession>
<accession>Q9VAP4</accession>
<evidence type="ECO:0000255" key="1"/>
<evidence type="ECO:0000256" key="2">
    <source>
        <dbReference type="SAM" id="MobiDB-lite"/>
    </source>
</evidence>
<evidence type="ECO:0000269" key="3">
    <source>
    </source>
</evidence>
<evidence type="ECO:0000269" key="4">
    <source>
    </source>
</evidence>
<evidence type="ECO:0000269" key="5">
    <source>
    </source>
</evidence>
<evidence type="ECO:0000303" key="6">
    <source>
    </source>
</evidence>
<evidence type="ECO:0000305" key="7"/>
<evidence type="ECO:0000312" key="8">
    <source>
        <dbReference type="FlyBase" id="FBgn0005596"/>
    </source>
</evidence>
<sequence length="1002" mass="109311">MSKGGEHKRVTLTSIIQGDAGFSRFGSNILEPDAASAAPDNSSKPTTKTAKCIRIKLDLFETDSNKYPEFNYSRLLYLEKKKTKKLKQVSTTNGSASTDPFADNDDDVARIVKELEAKYGNSYATGRGKSKKDDYRDIGMGYDESDSFIDNTEAYDEIIPEEAETLEGGFYINCGALEFKNLTKKSYTTRTDAIIKMPERSRKRMVSSSSESSSSSSGDDDENDDGNNEEDDESDSEDDSEENDESDSEDDSESESLEDEDSAATAKSSSKYKDNHQAKRAKVIVTGKSKPSSSSLTSGKKPPTKPITTSSSSNSPRPSTVEISDTEDGQDPIQTQPSSQLQSLPQSQAQAQALKKVVKTTTVKDMLKAKRDSFLKSQSGTAAVKGVGNGELKCVSTDVSSSDSSDMESEHGRADRQAGQHGKDGQENLRTADTLLPTTLDADIVTAVNSFKEAVKSRDMCGKKFNLDVKLSPLLLRVYEAVLCTDRNERNMVFSHIEYQLQLPKYYMLRKGKQVRAKEEKRKSTIMLEKLRRAVAVVMPKAVANYETELRTFAEQAAADVNSELPPKMPRKKFQWTSELRHLLYDVYQARWTSYAFLAKRKESLEEFINWYLKEKVVELWPPGWMRLDELQREITRYKNAKLKAKEKPKAPPASASPKPVGVVSAPEQMPPASSYLKAVEDPRSRGNSDTDSATSASSNSLKRKLKEMPKQTSKPPKKKVAKQVPLQPQLTPHPQFQLAPAATAAVSIPAISNNNNHLPHLDTLLSMPSTSAQAAALNAAAVAAASTVLDLASPSRKIDLNTSNNFYNLITAASLAASGNPSPHSGDGQAKVIVGARPSPHVINLDDYQCTSDILQTSKQLAATTTVITAISKAAQTTSVARESSSESDGVEIVGVFPASKPQKKVQSKPKNKTQNRGRSSLGAVGQVNGSLGYSANNMYIYNSPRTLGPVYDLTDPHIMKTMSNLKEMEKQFIQAAFSPNSVKGASGGMGSSAPSTPTRQ</sequence>